<accession>A6T345</accession>
<name>LIPA_JANMA</name>
<feature type="chain" id="PRO_0000325266" description="Lipoyl synthase">
    <location>
        <begin position="1"/>
        <end position="331"/>
    </location>
</feature>
<feature type="domain" description="Radical SAM core" evidence="2">
    <location>
        <begin position="82"/>
        <end position="300"/>
    </location>
</feature>
<feature type="region of interest" description="Disordered" evidence="3">
    <location>
        <begin position="1"/>
        <end position="20"/>
    </location>
</feature>
<feature type="binding site" evidence="1">
    <location>
        <position position="71"/>
    </location>
    <ligand>
        <name>[4Fe-4S] cluster</name>
        <dbReference type="ChEBI" id="CHEBI:49883"/>
        <label>1</label>
    </ligand>
</feature>
<feature type="binding site" evidence="1">
    <location>
        <position position="76"/>
    </location>
    <ligand>
        <name>[4Fe-4S] cluster</name>
        <dbReference type="ChEBI" id="CHEBI:49883"/>
        <label>1</label>
    </ligand>
</feature>
<feature type="binding site" evidence="1">
    <location>
        <position position="82"/>
    </location>
    <ligand>
        <name>[4Fe-4S] cluster</name>
        <dbReference type="ChEBI" id="CHEBI:49883"/>
        <label>1</label>
    </ligand>
</feature>
<feature type="binding site" evidence="1">
    <location>
        <position position="97"/>
    </location>
    <ligand>
        <name>[4Fe-4S] cluster</name>
        <dbReference type="ChEBI" id="CHEBI:49883"/>
        <label>2</label>
        <note>4Fe-4S-S-AdoMet</note>
    </ligand>
</feature>
<feature type="binding site" evidence="1">
    <location>
        <position position="101"/>
    </location>
    <ligand>
        <name>[4Fe-4S] cluster</name>
        <dbReference type="ChEBI" id="CHEBI:49883"/>
        <label>2</label>
        <note>4Fe-4S-S-AdoMet</note>
    </ligand>
</feature>
<feature type="binding site" evidence="1">
    <location>
        <position position="104"/>
    </location>
    <ligand>
        <name>[4Fe-4S] cluster</name>
        <dbReference type="ChEBI" id="CHEBI:49883"/>
        <label>2</label>
        <note>4Fe-4S-S-AdoMet</note>
    </ligand>
</feature>
<feature type="binding site" evidence="1">
    <location>
        <position position="311"/>
    </location>
    <ligand>
        <name>[4Fe-4S] cluster</name>
        <dbReference type="ChEBI" id="CHEBI:49883"/>
        <label>1</label>
    </ligand>
</feature>
<dbReference type="EC" id="2.8.1.8" evidence="1"/>
<dbReference type="EMBL" id="CP000269">
    <property type="protein sequence ID" value="ABR89574.1"/>
    <property type="molecule type" value="Genomic_DNA"/>
</dbReference>
<dbReference type="RefSeq" id="WP_012081095.1">
    <property type="nucleotide sequence ID" value="NC_009659.1"/>
</dbReference>
<dbReference type="SMR" id="A6T345"/>
<dbReference type="STRING" id="375286.mma_3252"/>
<dbReference type="KEGG" id="mms:mma_3252"/>
<dbReference type="eggNOG" id="COG0320">
    <property type="taxonomic scope" value="Bacteria"/>
</dbReference>
<dbReference type="HOGENOM" id="CLU_033144_2_1_4"/>
<dbReference type="OrthoDB" id="9787898at2"/>
<dbReference type="UniPathway" id="UPA00538">
    <property type="reaction ID" value="UER00593"/>
</dbReference>
<dbReference type="Proteomes" id="UP000006388">
    <property type="component" value="Chromosome"/>
</dbReference>
<dbReference type="GO" id="GO:0005737">
    <property type="term" value="C:cytoplasm"/>
    <property type="evidence" value="ECO:0007669"/>
    <property type="project" value="UniProtKB-SubCell"/>
</dbReference>
<dbReference type="GO" id="GO:0051539">
    <property type="term" value="F:4 iron, 4 sulfur cluster binding"/>
    <property type="evidence" value="ECO:0007669"/>
    <property type="project" value="UniProtKB-UniRule"/>
</dbReference>
<dbReference type="GO" id="GO:0016992">
    <property type="term" value="F:lipoate synthase activity"/>
    <property type="evidence" value="ECO:0007669"/>
    <property type="project" value="UniProtKB-UniRule"/>
</dbReference>
<dbReference type="GO" id="GO:0046872">
    <property type="term" value="F:metal ion binding"/>
    <property type="evidence" value="ECO:0007669"/>
    <property type="project" value="UniProtKB-KW"/>
</dbReference>
<dbReference type="CDD" id="cd01335">
    <property type="entry name" value="Radical_SAM"/>
    <property type="match status" value="1"/>
</dbReference>
<dbReference type="FunFam" id="3.20.20.70:FF:000023">
    <property type="entry name" value="Lipoyl synthase"/>
    <property type="match status" value="1"/>
</dbReference>
<dbReference type="Gene3D" id="3.20.20.70">
    <property type="entry name" value="Aldolase class I"/>
    <property type="match status" value="1"/>
</dbReference>
<dbReference type="HAMAP" id="MF_00206">
    <property type="entry name" value="Lipoyl_synth"/>
    <property type="match status" value="1"/>
</dbReference>
<dbReference type="InterPro" id="IPR013785">
    <property type="entry name" value="Aldolase_TIM"/>
</dbReference>
<dbReference type="InterPro" id="IPR006638">
    <property type="entry name" value="Elp3/MiaA/NifB-like_rSAM"/>
</dbReference>
<dbReference type="InterPro" id="IPR003698">
    <property type="entry name" value="Lipoyl_synth"/>
</dbReference>
<dbReference type="InterPro" id="IPR007197">
    <property type="entry name" value="rSAM"/>
</dbReference>
<dbReference type="NCBIfam" id="TIGR00510">
    <property type="entry name" value="lipA"/>
    <property type="match status" value="1"/>
</dbReference>
<dbReference type="NCBIfam" id="NF004019">
    <property type="entry name" value="PRK05481.1"/>
    <property type="match status" value="1"/>
</dbReference>
<dbReference type="NCBIfam" id="NF009544">
    <property type="entry name" value="PRK12928.1"/>
    <property type="match status" value="1"/>
</dbReference>
<dbReference type="PANTHER" id="PTHR10949">
    <property type="entry name" value="LIPOYL SYNTHASE"/>
    <property type="match status" value="1"/>
</dbReference>
<dbReference type="PANTHER" id="PTHR10949:SF0">
    <property type="entry name" value="LIPOYL SYNTHASE, MITOCHONDRIAL"/>
    <property type="match status" value="1"/>
</dbReference>
<dbReference type="Pfam" id="PF04055">
    <property type="entry name" value="Radical_SAM"/>
    <property type="match status" value="1"/>
</dbReference>
<dbReference type="PIRSF" id="PIRSF005963">
    <property type="entry name" value="Lipoyl_synth"/>
    <property type="match status" value="1"/>
</dbReference>
<dbReference type="SFLD" id="SFLDF00271">
    <property type="entry name" value="lipoyl_synthase"/>
    <property type="match status" value="1"/>
</dbReference>
<dbReference type="SFLD" id="SFLDG01058">
    <property type="entry name" value="lipoyl_synthase_like"/>
    <property type="match status" value="1"/>
</dbReference>
<dbReference type="SMART" id="SM00729">
    <property type="entry name" value="Elp3"/>
    <property type="match status" value="1"/>
</dbReference>
<dbReference type="SUPFAM" id="SSF102114">
    <property type="entry name" value="Radical SAM enzymes"/>
    <property type="match status" value="1"/>
</dbReference>
<dbReference type="PROSITE" id="PS51918">
    <property type="entry name" value="RADICAL_SAM"/>
    <property type="match status" value="1"/>
</dbReference>
<keyword id="KW-0004">4Fe-4S</keyword>
<keyword id="KW-0963">Cytoplasm</keyword>
<keyword id="KW-0408">Iron</keyword>
<keyword id="KW-0411">Iron-sulfur</keyword>
<keyword id="KW-0479">Metal-binding</keyword>
<keyword id="KW-0949">S-adenosyl-L-methionine</keyword>
<keyword id="KW-0808">Transferase</keyword>
<gene>
    <name evidence="1" type="primary">lipA</name>
    <name type="ordered locus">mma_3252</name>
</gene>
<protein>
    <recommendedName>
        <fullName evidence="1">Lipoyl synthase</fullName>
        <ecNumber evidence="1">2.8.1.8</ecNumber>
    </recommendedName>
    <alternativeName>
        <fullName evidence="1">Lip-syn</fullName>
        <shortName evidence="1">LS</shortName>
    </alternativeName>
    <alternativeName>
        <fullName evidence="1">Lipoate synthase</fullName>
    </alternativeName>
    <alternativeName>
        <fullName evidence="1">Lipoic acid synthase</fullName>
    </alternativeName>
    <alternativeName>
        <fullName evidence="1">Sulfur insertion protein LipA</fullName>
    </alternativeName>
</protein>
<organism>
    <name type="scientific">Janthinobacterium sp. (strain Marseille)</name>
    <name type="common">Minibacterium massiliensis</name>
    <dbReference type="NCBI Taxonomy" id="375286"/>
    <lineage>
        <taxon>Bacteria</taxon>
        <taxon>Pseudomonadati</taxon>
        <taxon>Pseudomonadota</taxon>
        <taxon>Betaproteobacteria</taxon>
        <taxon>Burkholderiales</taxon>
        <taxon>Oxalobacteraceae</taxon>
        <taxon>Janthinobacterium</taxon>
    </lineage>
</organism>
<proteinExistence type="inferred from homology"/>
<comment type="function">
    <text evidence="1">Catalyzes the radical-mediated insertion of two sulfur atoms into the C-6 and C-8 positions of the octanoyl moiety bound to the lipoyl domains of lipoate-dependent enzymes, thereby converting the octanoylated domains into lipoylated derivatives.</text>
</comment>
<comment type="catalytic activity">
    <reaction evidence="1">
        <text>[[Fe-S] cluster scaffold protein carrying a second [4Fe-4S](2+) cluster] + N(6)-octanoyl-L-lysyl-[protein] + 2 oxidized [2Fe-2S]-[ferredoxin] + 2 S-adenosyl-L-methionine + 4 H(+) = [[Fe-S] cluster scaffold protein] + N(6)-[(R)-dihydrolipoyl]-L-lysyl-[protein] + 4 Fe(3+) + 2 hydrogen sulfide + 2 5'-deoxyadenosine + 2 L-methionine + 2 reduced [2Fe-2S]-[ferredoxin]</text>
        <dbReference type="Rhea" id="RHEA:16585"/>
        <dbReference type="Rhea" id="RHEA-COMP:9928"/>
        <dbReference type="Rhea" id="RHEA-COMP:10000"/>
        <dbReference type="Rhea" id="RHEA-COMP:10001"/>
        <dbReference type="Rhea" id="RHEA-COMP:10475"/>
        <dbReference type="Rhea" id="RHEA-COMP:14568"/>
        <dbReference type="Rhea" id="RHEA-COMP:14569"/>
        <dbReference type="ChEBI" id="CHEBI:15378"/>
        <dbReference type="ChEBI" id="CHEBI:17319"/>
        <dbReference type="ChEBI" id="CHEBI:29034"/>
        <dbReference type="ChEBI" id="CHEBI:29919"/>
        <dbReference type="ChEBI" id="CHEBI:33722"/>
        <dbReference type="ChEBI" id="CHEBI:33737"/>
        <dbReference type="ChEBI" id="CHEBI:33738"/>
        <dbReference type="ChEBI" id="CHEBI:57844"/>
        <dbReference type="ChEBI" id="CHEBI:59789"/>
        <dbReference type="ChEBI" id="CHEBI:78809"/>
        <dbReference type="ChEBI" id="CHEBI:83100"/>
        <dbReference type="EC" id="2.8.1.8"/>
    </reaction>
</comment>
<comment type="cofactor">
    <cofactor evidence="1">
        <name>[4Fe-4S] cluster</name>
        <dbReference type="ChEBI" id="CHEBI:49883"/>
    </cofactor>
    <text evidence="1">Binds 2 [4Fe-4S] clusters per subunit. One cluster is coordinated with 3 cysteines and an exchangeable S-adenosyl-L-methionine.</text>
</comment>
<comment type="pathway">
    <text evidence="1">Protein modification; protein lipoylation via endogenous pathway; protein N(6)-(lipoyl)lysine from octanoyl-[acyl-carrier-protein]: step 2/2.</text>
</comment>
<comment type="subcellular location">
    <subcellularLocation>
        <location evidence="1">Cytoplasm</location>
    </subcellularLocation>
</comment>
<comment type="similarity">
    <text evidence="1">Belongs to the radical SAM superfamily. Lipoyl synthase family.</text>
</comment>
<sequence>MTTETNPAVTPAYNPSEKQKGAAKTIRIPIKVIPMERLPKPDWIRVKAASPSTRFYEIKDILRANNLVTVCEEASCPNIGECFGKGTATFMIMGDKCTRRCPFCDVGHGRPDPLDVNEPENLAKTIAALRLNYVVITSVDRDDLRDGGAGHFAECIRRVRELSPNTRIEILVPDFRGRMDRALEILNAAPPDVMNHNLETAPRLYKEARPGSDYEYSLNLLKRFKAQHPNTPTKSGIMVGLGETDEEVLQVMRDMRAHDVDMLTIGQYLMPSGDHLPVRRYVHPDTFKMYEEEAYKMGFAHAAVGAMVRSSYHADQQAHGVTSAQSDVVNK</sequence>
<reference key="1">
    <citation type="journal article" date="2007" name="PLoS Genet.">
        <title>Genome analysis of Minibacterium massiliensis highlights the convergent evolution of water-living bacteria.</title>
        <authorList>
            <person name="Audic S."/>
            <person name="Robert C."/>
            <person name="Campagna B."/>
            <person name="Parinello H."/>
            <person name="Claverie J.-M."/>
            <person name="Raoult D."/>
            <person name="Drancourt M."/>
        </authorList>
    </citation>
    <scope>NUCLEOTIDE SEQUENCE [LARGE SCALE GENOMIC DNA]</scope>
    <source>
        <strain>Marseille</strain>
    </source>
</reference>
<evidence type="ECO:0000255" key="1">
    <source>
        <dbReference type="HAMAP-Rule" id="MF_00206"/>
    </source>
</evidence>
<evidence type="ECO:0000255" key="2">
    <source>
        <dbReference type="PROSITE-ProRule" id="PRU01266"/>
    </source>
</evidence>
<evidence type="ECO:0000256" key="3">
    <source>
        <dbReference type="SAM" id="MobiDB-lite"/>
    </source>
</evidence>